<dbReference type="RefSeq" id="NP_001300798.1">
    <property type="nucleotide sequence ID" value="NM_001313869.2"/>
</dbReference>
<dbReference type="SMR" id="E2R222"/>
<dbReference type="FunCoup" id="E2R222">
    <property type="interactions" value="1518"/>
</dbReference>
<dbReference type="STRING" id="9615.ENSCAFP00000015956"/>
<dbReference type="PaxDb" id="9612-ENSCAFP00000015956"/>
<dbReference type="Ensembl" id="ENSCAFT00000017241.4">
    <property type="protein sequence ID" value="ENSCAFP00000015956.2"/>
    <property type="gene ID" value="ENSCAFG00000010838.4"/>
</dbReference>
<dbReference type="Ensembl" id="ENSCAFT00030015334.1">
    <property type="protein sequence ID" value="ENSCAFP00030013372.1"/>
    <property type="gene ID" value="ENSCAFG00030008325.1"/>
</dbReference>
<dbReference type="Ensembl" id="ENSCAFT00040046358.1">
    <property type="protein sequence ID" value="ENSCAFP00040040455.1"/>
    <property type="gene ID" value="ENSCAFG00040024866.1"/>
</dbReference>
<dbReference type="Ensembl" id="ENSCAFT00845047843.1">
    <property type="protein sequence ID" value="ENSCAFP00845037534.1"/>
    <property type="gene ID" value="ENSCAFG00845027144.1"/>
</dbReference>
<dbReference type="GeneID" id="609426"/>
<dbReference type="KEGG" id="cfa:609426"/>
<dbReference type="CTD" id="9319"/>
<dbReference type="VEuPathDB" id="HostDB:ENSCAFG00845027144"/>
<dbReference type="VGNC" id="VGNC:47846">
    <property type="gene designation" value="TRIP13"/>
</dbReference>
<dbReference type="eggNOG" id="KOG0744">
    <property type="taxonomic scope" value="Eukaryota"/>
</dbReference>
<dbReference type="GeneTree" id="ENSGT00390000017432"/>
<dbReference type="HOGENOM" id="CLU_028208_0_1_1"/>
<dbReference type="InParanoid" id="E2R222"/>
<dbReference type="OMA" id="NVCDSVQ"/>
<dbReference type="OrthoDB" id="10042665at2759"/>
<dbReference type="TreeFam" id="TF313507"/>
<dbReference type="Proteomes" id="UP000002254">
    <property type="component" value="Chromosome 34"/>
</dbReference>
<dbReference type="Proteomes" id="UP000694429">
    <property type="component" value="Chromosome 34"/>
</dbReference>
<dbReference type="Proteomes" id="UP000694542">
    <property type="component" value="Chromosome 34"/>
</dbReference>
<dbReference type="Proteomes" id="UP000805418">
    <property type="component" value="Chromosome 34"/>
</dbReference>
<dbReference type="Bgee" id="ENSCAFG00000010838">
    <property type="expression patterns" value="Expressed in keratinocyte and 50 other cell types or tissues"/>
</dbReference>
<dbReference type="GO" id="GO:0005694">
    <property type="term" value="C:chromosome"/>
    <property type="evidence" value="ECO:0000318"/>
    <property type="project" value="GO_Central"/>
</dbReference>
<dbReference type="GO" id="GO:0001673">
    <property type="term" value="C:male germ cell nucleus"/>
    <property type="evidence" value="ECO:0007669"/>
    <property type="project" value="Ensembl"/>
</dbReference>
<dbReference type="GO" id="GO:0005634">
    <property type="term" value="C:nucleus"/>
    <property type="evidence" value="ECO:0000318"/>
    <property type="project" value="GO_Central"/>
</dbReference>
<dbReference type="GO" id="GO:0005524">
    <property type="term" value="F:ATP binding"/>
    <property type="evidence" value="ECO:0007669"/>
    <property type="project" value="UniProtKB-KW"/>
</dbReference>
<dbReference type="GO" id="GO:0016887">
    <property type="term" value="F:ATP hydrolysis activity"/>
    <property type="evidence" value="ECO:0007669"/>
    <property type="project" value="InterPro"/>
</dbReference>
<dbReference type="GO" id="GO:0042802">
    <property type="term" value="F:identical protein binding"/>
    <property type="evidence" value="ECO:0007669"/>
    <property type="project" value="Ensembl"/>
</dbReference>
<dbReference type="GO" id="GO:0006302">
    <property type="term" value="P:double-strand break repair"/>
    <property type="evidence" value="ECO:0000250"/>
    <property type="project" value="UniProtKB"/>
</dbReference>
<dbReference type="GO" id="GO:0007144">
    <property type="term" value="P:female meiosis I"/>
    <property type="evidence" value="ECO:0007669"/>
    <property type="project" value="Ensembl"/>
</dbReference>
<dbReference type="GO" id="GO:0007141">
    <property type="term" value="P:male meiosis I"/>
    <property type="evidence" value="ECO:0007669"/>
    <property type="project" value="Ensembl"/>
</dbReference>
<dbReference type="GO" id="GO:0051598">
    <property type="term" value="P:meiotic recombination checkpoint signaling"/>
    <property type="evidence" value="ECO:0000318"/>
    <property type="project" value="GO_Central"/>
</dbReference>
<dbReference type="GO" id="GO:0007094">
    <property type="term" value="P:mitotic spindle assembly checkpoint signaling"/>
    <property type="evidence" value="ECO:0007669"/>
    <property type="project" value="Ensembl"/>
</dbReference>
<dbReference type="GO" id="GO:0001556">
    <property type="term" value="P:oocyte maturation"/>
    <property type="evidence" value="ECO:0007669"/>
    <property type="project" value="Ensembl"/>
</dbReference>
<dbReference type="GO" id="GO:0048477">
    <property type="term" value="P:oogenesis"/>
    <property type="evidence" value="ECO:0000250"/>
    <property type="project" value="UniProtKB"/>
</dbReference>
<dbReference type="GO" id="GO:0007131">
    <property type="term" value="P:reciprocal meiotic recombination"/>
    <property type="evidence" value="ECO:0000250"/>
    <property type="project" value="UniProtKB"/>
</dbReference>
<dbReference type="GO" id="GO:0007286">
    <property type="term" value="P:spermatid development"/>
    <property type="evidence" value="ECO:0007669"/>
    <property type="project" value="Ensembl"/>
</dbReference>
<dbReference type="GO" id="GO:0007283">
    <property type="term" value="P:spermatogenesis"/>
    <property type="evidence" value="ECO:0000250"/>
    <property type="project" value="UniProtKB"/>
</dbReference>
<dbReference type="GO" id="GO:0007130">
    <property type="term" value="P:synaptonemal complex assembly"/>
    <property type="evidence" value="ECO:0000250"/>
    <property type="project" value="UniProtKB"/>
</dbReference>
<dbReference type="CDD" id="cd19508">
    <property type="entry name" value="RecA-like_Pch2-like"/>
    <property type="match status" value="1"/>
</dbReference>
<dbReference type="FunFam" id="3.40.50.300:FF:000662">
    <property type="entry name" value="Pachytene checkpoint protein 2 homolog"/>
    <property type="match status" value="1"/>
</dbReference>
<dbReference type="Gene3D" id="3.40.50.300">
    <property type="entry name" value="P-loop containing nucleotide triphosphate hydrolases"/>
    <property type="match status" value="1"/>
</dbReference>
<dbReference type="InterPro" id="IPR003593">
    <property type="entry name" value="AAA+_ATPase"/>
</dbReference>
<dbReference type="InterPro" id="IPR003959">
    <property type="entry name" value="ATPase_AAA_core"/>
</dbReference>
<dbReference type="InterPro" id="IPR003960">
    <property type="entry name" value="ATPase_AAA_CS"/>
</dbReference>
<dbReference type="InterPro" id="IPR001270">
    <property type="entry name" value="ClpA/B"/>
</dbReference>
<dbReference type="InterPro" id="IPR027417">
    <property type="entry name" value="P-loop_NTPase"/>
</dbReference>
<dbReference type="InterPro" id="IPR044539">
    <property type="entry name" value="Pch2-like"/>
</dbReference>
<dbReference type="PANTHER" id="PTHR45991">
    <property type="entry name" value="PACHYTENE CHECKPOINT PROTEIN 2"/>
    <property type="match status" value="1"/>
</dbReference>
<dbReference type="PANTHER" id="PTHR45991:SF1">
    <property type="entry name" value="PACHYTENE CHECKPOINT PROTEIN 2 HOMOLOG"/>
    <property type="match status" value="1"/>
</dbReference>
<dbReference type="Pfam" id="PF00004">
    <property type="entry name" value="AAA"/>
    <property type="match status" value="1"/>
</dbReference>
<dbReference type="Pfam" id="PF23242">
    <property type="entry name" value="AAA_lid_TRIP13_C"/>
    <property type="match status" value="1"/>
</dbReference>
<dbReference type="Pfam" id="PF23563">
    <property type="entry name" value="TRIP13_N"/>
    <property type="match status" value="1"/>
</dbReference>
<dbReference type="PRINTS" id="PR00300">
    <property type="entry name" value="CLPPROTEASEA"/>
</dbReference>
<dbReference type="SMART" id="SM00382">
    <property type="entry name" value="AAA"/>
    <property type="match status" value="1"/>
</dbReference>
<dbReference type="SUPFAM" id="SSF52540">
    <property type="entry name" value="P-loop containing nucleoside triphosphate hydrolases"/>
    <property type="match status" value="1"/>
</dbReference>
<dbReference type="PROSITE" id="PS00674">
    <property type="entry name" value="AAA"/>
    <property type="match status" value="1"/>
</dbReference>
<sequence length="432" mass="48435">MDEAVGDLKQALPCVAEAPTVHVEVHQRSCSTAKKEDIKLSVRKLLNRHNIVFGDYKWNEFDDPFLARNVQSVSIVDTELKVKDPQPIDLGACTIALHVFQLNEGGPSSETLEEETENITAASHWVLPAAEFHGLWDSLVYDVEVKSHLLDYVMTTLLFSDKNVDSNLIAWNRVVLLHGPPGTGKTSLCKALAQKLTIRLSSRYQYGQLIEINSHSLFSKWFSESGKLVTKMFQKIQDLIDDKDALVFVLIDEVESLTAARNACRAGTEPSDAIRVVNAVLTQIDQIKRHCNVVILTTSNITERIDVAFVDRADIRQYIGPPSAAAIFKIYLSCLEELMKCQIIYPRQQLLTLRELEMIGFIENNVSKLSLLLSEISRKSEGLSGRVLRKLPFLAHALYIQAPTVTIEGFLQALSLAVDKQFEERKKLSSCI</sequence>
<name>PCH2_CANLF</name>
<gene>
    <name type="primary">TRIP13</name>
    <name type="synonym">PCH2</name>
</gene>
<protein>
    <recommendedName>
        <fullName>Pachytene checkpoint protein 2 homolog</fullName>
    </recommendedName>
    <alternativeName>
        <fullName>Thyroid hormone receptor interactor 13</fullName>
    </alternativeName>
    <alternativeName>
        <fullName>Thyroid receptor-interacting protein 13</fullName>
        <shortName>TR-interacting protein 13</shortName>
        <shortName>TRIP-13</shortName>
    </alternativeName>
</protein>
<evidence type="ECO:0000250" key="1"/>
<evidence type="ECO:0000250" key="2">
    <source>
        <dbReference type="UniProtKB" id="Q15645"/>
    </source>
</evidence>
<evidence type="ECO:0000250" key="3">
    <source>
        <dbReference type="UniProtKB" id="Q3UA06"/>
    </source>
</evidence>
<evidence type="ECO:0000255" key="4"/>
<evidence type="ECO:0000305" key="5"/>
<comment type="function">
    <text evidence="1">Plays a key role in chromosome recombination and chromosome structure development during meiosis. Required at early steps in meiotic recombination that leads to non-crossovers pathways. Also needed for efficient completion of homologous synapsis by influencing crossover distribution along the chromosomes affecting both crossovers and non-crossovers pathways. Also required for development of higher-order chromosome structures and is needed for synaptonemal-complex formation. In males, required for efficient synapsis of the sex chromosomes and for sex body formation. Promotes early steps of the DNA double-strand breaks (DSBs) repair process upstream of the assembly of RAD51 complexes. Required for depletion of HORMAD1 and HORMAD2 from synapsed chromosomes (By similarity).</text>
</comment>
<comment type="subunit">
    <text evidence="1 3">Specifically interacts with the ligand binding domain of the thyroid receptor (TR). This interaction does not require the presence of thyroid hormone for its interaction (By similarity). Interacts with proteasome subunit PSMA8; to participate in meiosis progression during spermatogenesis (By similarity).</text>
</comment>
<comment type="similarity">
    <text evidence="5">Belongs to the AAA ATPase family. PCH2 subfamily.</text>
</comment>
<proteinExistence type="inferred from homology"/>
<reference key="1">
    <citation type="journal article" date="2005" name="Nature">
        <title>Genome sequence, comparative analysis and haplotype structure of the domestic dog.</title>
        <authorList>
            <person name="Lindblad-Toh K."/>
            <person name="Wade C.M."/>
            <person name="Mikkelsen T.S."/>
            <person name="Karlsson E.K."/>
            <person name="Jaffe D.B."/>
            <person name="Kamal M."/>
            <person name="Clamp M."/>
            <person name="Chang J.L."/>
            <person name="Kulbokas E.J. III"/>
            <person name="Zody M.C."/>
            <person name="Mauceli E."/>
            <person name="Xie X."/>
            <person name="Breen M."/>
            <person name="Wayne R.K."/>
            <person name="Ostrander E.A."/>
            <person name="Ponting C.P."/>
            <person name="Galibert F."/>
            <person name="Smith D.R."/>
            <person name="deJong P.J."/>
            <person name="Kirkness E.F."/>
            <person name="Alvarez P."/>
            <person name="Biagi T."/>
            <person name="Brockman W."/>
            <person name="Butler J."/>
            <person name="Chin C.-W."/>
            <person name="Cook A."/>
            <person name="Cuff J."/>
            <person name="Daly M.J."/>
            <person name="DeCaprio D."/>
            <person name="Gnerre S."/>
            <person name="Grabherr M."/>
            <person name="Kellis M."/>
            <person name="Kleber M."/>
            <person name="Bardeleben C."/>
            <person name="Goodstadt L."/>
            <person name="Heger A."/>
            <person name="Hitte C."/>
            <person name="Kim L."/>
            <person name="Koepfli K.-P."/>
            <person name="Parker H.G."/>
            <person name="Pollinger J.P."/>
            <person name="Searle S.M.J."/>
            <person name="Sutter N.B."/>
            <person name="Thomas R."/>
            <person name="Webber C."/>
            <person name="Baldwin J."/>
            <person name="Abebe A."/>
            <person name="Abouelleil A."/>
            <person name="Aftuck L."/>
            <person name="Ait-Zahra M."/>
            <person name="Aldredge T."/>
            <person name="Allen N."/>
            <person name="An P."/>
            <person name="Anderson S."/>
            <person name="Antoine C."/>
            <person name="Arachchi H."/>
            <person name="Aslam A."/>
            <person name="Ayotte L."/>
            <person name="Bachantsang P."/>
            <person name="Barry A."/>
            <person name="Bayul T."/>
            <person name="Benamara M."/>
            <person name="Berlin A."/>
            <person name="Bessette D."/>
            <person name="Blitshteyn B."/>
            <person name="Bloom T."/>
            <person name="Blye J."/>
            <person name="Boguslavskiy L."/>
            <person name="Bonnet C."/>
            <person name="Boukhgalter B."/>
            <person name="Brown A."/>
            <person name="Cahill P."/>
            <person name="Calixte N."/>
            <person name="Camarata J."/>
            <person name="Cheshatsang Y."/>
            <person name="Chu J."/>
            <person name="Citroen M."/>
            <person name="Collymore A."/>
            <person name="Cooke P."/>
            <person name="Dawoe T."/>
            <person name="Daza R."/>
            <person name="Decktor K."/>
            <person name="DeGray S."/>
            <person name="Dhargay N."/>
            <person name="Dooley K."/>
            <person name="Dooley K."/>
            <person name="Dorje P."/>
            <person name="Dorjee K."/>
            <person name="Dorris L."/>
            <person name="Duffey N."/>
            <person name="Dupes A."/>
            <person name="Egbiremolen O."/>
            <person name="Elong R."/>
            <person name="Falk J."/>
            <person name="Farina A."/>
            <person name="Faro S."/>
            <person name="Ferguson D."/>
            <person name="Ferreira P."/>
            <person name="Fisher S."/>
            <person name="FitzGerald M."/>
            <person name="Foley K."/>
            <person name="Foley C."/>
            <person name="Franke A."/>
            <person name="Friedrich D."/>
            <person name="Gage D."/>
            <person name="Garber M."/>
            <person name="Gearin G."/>
            <person name="Giannoukos G."/>
            <person name="Goode T."/>
            <person name="Goyette A."/>
            <person name="Graham J."/>
            <person name="Grandbois E."/>
            <person name="Gyaltsen K."/>
            <person name="Hafez N."/>
            <person name="Hagopian D."/>
            <person name="Hagos B."/>
            <person name="Hall J."/>
            <person name="Healy C."/>
            <person name="Hegarty R."/>
            <person name="Honan T."/>
            <person name="Horn A."/>
            <person name="Houde N."/>
            <person name="Hughes L."/>
            <person name="Hunnicutt L."/>
            <person name="Husby M."/>
            <person name="Jester B."/>
            <person name="Jones C."/>
            <person name="Kamat A."/>
            <person name="Kanga B."/>
            <person name="Kells C."/>
            <person name="Khazanovich D."/>
            <person name="Kieu A.C."/>
            <person name="Kisner P."/>
            <person name="Kumar M."/>
            <person name="Lance K."/>
            <person name="Landers T."/>
            <person name="Lara M."/>
            <person name="Lee W."/>
            <person name="Leger J.-P."/>
            <person name="Lennon N."/>
            <person name="Leuper L."/>
            <person name="LeVine S."/>
            <person name="Liu J."/>
            <person name="Liu X."/>
            <person name="Lokyitsang Y."/>
            <person name="Lokyitsang T."/>
            <person name="Lui A."/>
            <person name="Macdonald J."/>
            <person name="Major J."/>
            <person name="Marabella R."/>
            <person name="Maru K."/>
            <person name="Matthews C."/>
            <person name="McDonough S."/>
            <person name="Mehta T."/>
            <person name="Meldrim J."/>
            <person name="Melnikov A."/>
            <person name="Meneus L."/>
            <person name="Mihalev A."/>
            <person name="Mihova T."/>
            <person name="Miller K."/>
            <person name="Mittelman R."/>
            <person name="Mlenga V."/>
            <person name="Mulrain L."/>
            <person name="Munson G."/>
            <person name="Navidi A."/>
            <person name="Naylor J."/>
            <person name="Nguyen T."/>
            <person name="Nguyen N."/>
            <person name="Nguyen C."/>
            <person name="Nguyen T."/>
            <person name="Nicol R."/>
            <person name="Norbu N."/>
            <person name="Norbu C."/>
            <person name="Novod N."/>
            <person name="Nyima T."/>
            <person name="Olandt P."/>
            <person name="O'Neill B."/>
            <person name="O'Neill K."/>
            <person name="Osman S."/>
            <person name="Oyono L."/>
            <person name="Patti C."/>
            <person name="Perrin D."/>
            <person name="Phunkhang P."/>
            <person name="Pierre F."/>
            <person name="Priest M."/>
            <person name="Rachupka A."/>
            <person name="Raghuraman S."/>
            <person name="Rameau R."/>
            <person name="Ray V."/>
            <person name="Raymond C."/>
            <person name="Rege F."/>
            <person name="Rise C."/>
            <person name="Rogers J."/>
            <person name="Rogov P."/>
            <person name="Sahalie J."/>
            <person name="Settipalli S."/>
            <person name="Sharpe T."/>
            <person name="Shea T."/>
            <person name="Sheehan M."/>
            <person name="Sherpa N."/>
            <person name="Shi J."/>
            <person name="Shih D."/>
            <person name="Sloan J."/>
            <person name="Smith C."/>
            <person name="Sparrow T."/>
            <person name="Stalker J."/>
            <person name="Stange-Thomann N."/>
            <person name="Stavropoulos S."/>
            <person name="Stone C."/>
            <person name="Stone S."/>
            <person name="Sykes S."/>
            <person name="Tchuinga P."/>
            <person name="Tenzing P."/>
            <person name="Tesfaye S."/>
            <person name="Thoulutsang D."/>
            <person name="Thoulutsang Y."/>
            <person name="Topham K."/>
            <person name="Topping I."/>
            <person name="Tsamla T."/>
            <person name="Vassiliev H."/>
            <person name="Venkataraman V."/>
            <person name="Vo A."/>
            <person name="Wangchuk T."/>
            <person name="Wangdi T."/>
            <person name="Weiand M."/>
            <person name="Wilkinson J."/>
            <person name="Wilson A."/>
            <person name="Yadav S."/>
            <person name="Yang S."/>
            <person name="Yang X."/>
            <person name="Young G."/>
            <person name="Yu Q."/>
            <person name="Zainoun J."/>
            <person name="Zembek L."/>
            <person name="Zimmer A."/>
            <person name="Lander E.S."/>
        </authorList>
    </citation>
    <scope>NUCLEOTIDE SEQUENCE [LARGE SCALE GENOMIC DNA]</scope>
    <source>
        <strain>Boxer</strain>
    </source>
</reference>
<accession>E2R222</accession>
<feature type="chain" id="PRO_0000410921" description="Pachytene checkpoint protein 2 homolog">
    <location>
        <begin position="1"/>
        <end position="432"/>
    </location>
</feature>
<feature type="binding site" evidence="4">
    <location>
        <begin position="179"/>
        <end position="186"/>
    </location>
    <ligand>
        <name>ATP</name>
        <dbReference type="ChEBI" id="CHEBI:30616"/>
    </ligand>
</feature>
<feature type="modified residue" description="N-acetylmethionine" evidence="2">
    <location>
        <position position="1"/>
    </location>
</feature>
<organism>
    <name type="scientific">Canis lupus familiaris</name>
    <name type="common">Dog</name>
    <name type="synonym">Canis familiaris</name>
    <dbReference type="NCBI Taxonomy" id="9615"/>
    <lineage>
        <taxon>Eukaryota</taxon>
        <taxon>Metazoa</taxon>
        <taxon>Chordata</taxon>
        <taxon>Craniata</taxon>
        <taxon>Vertebrata</taxon>
        <taxon>Euteleostomi</taxon>
        <taxon>Mammalia</taxon>
        <taxon>Eutheria</taxon>
        <taxon>Laurasiatheria</taxon>
        <taxon>Carnivora</taxon>
        <taxon>Caniformia</taxon>
        <taxon>Canidae</taxon>
        <taxon>Canis</taxon>
    </lineage>
</organism>
<keyword id="KW-0007">Acetylation</keyword>
<keyword id="KW-0067">ATP-binding</keyword>
<keyword id="KW-0221">Differentiation</keyword>
<keyword id="KW-0469">Meiosis</keyword>
<keyword id="KW-0547">Nucleotide-binding</keyword>
<keyword id="KW-0896">Oogenesis</keyword>
<keyword id="KW-1185">Reference proteome</keyword>
<keyword id="KW-0744">Spermatogenesis</keyword>